<gene>
    <name evidence="11" type="primary">sdeA</name>
    <name evidence="17" type="ordered locus">lpg2157</name>
</gene>
<sequence length="1499" mass="169043">MPKYVEGVELTQEGMHAIFARMGYGDITSGSIYNGVPTIDTGALNRQGFMPVLTGVGPHRDSGHWIMLIKGPGNQYYLFDPLGKTSGEGYQNILAAQLPMGSTLSVIPNGSGLNMGLCGYWVASAGLRAHQALNQHNPPTLLNVGQTITNEMRNELDHDGYRKITGWLRAVADEFPEGDPQLDGKALRENTEKDLKIEIPTLVLPGKDTSPKEMSVKPTAPQDKSVPVWNGFSLYTDDTVKAAAQYAYDNYLGKPYTGSVESAPANFGGRMVYRQHHGLSHTLRTMAYAELIVEEARKAKLRGETLGKFKDGRTIADVTPQELKKIMIAQAFFVAGRDDEASDAKNYQKYHEQSRDAFLKYVKDNESTLIPDVFKDQEDVNFYARVIEDKSHDWESTPAHVLINQGHMVDLVRVKQPPESFLQRYFSSMQRWIGSQATEAVFGIQRQFFHATYEVVAGFDSDNKEPHLVVSGLGRYVIGEDGQPIREAPKKGQKEGDLKVFPQTYKLKENERLMRVDEFLKLPEIQNTFPGSGKHLQGGMPGMNEMDYWNRLNSLNRARCENDVDFCLKQLQTAHDKAKIEPIKQAFQSSKGKERRQPNVDEIAAARIIQQILANPDCIHDDHVLINGQKLEQQFFRDLLAKCEMAVVGSLLNDTDIGNIDTLMRHEKDTEFHSTNPEAVPVKIGEYWINDQRINNSSGNITQKKHDLIFLMQNDAWYFSRVNAIAQNRDKGSTFKEVLITTLMTPLTSKALVDTSQAKPPTRLFRGLNLSEEFTKGLIDQANAMIANTTERLFTDHSPEAFKQIKLNDLSKMSGRTNASTTTEIKLVKETWDSNVIFEMLDPDGLLHSKQVGRHGEGTESEFSVYLPEDVALVPVKVTLDGKTQKGENRYVFTFVAVKSPDFTPRHESGYAVEPFLRMQAAKLAEVKSSIEKAQRAPDLETIFNLQNEVEAVQYSHLSTGYKNFLKNTVGPVLENSLSGLMESDTDTLSKALAAFPSDTQWSAFNFEEARQAKRQMDAIKQMVGNKVVLDALTQCQDALEKQNIAGALDALKKIPSEKEMGTIRRELREQIQSARQELESLQRAVVTPVVTDEKKVRERYDALIENTSKKITELETGKLPNLDAVKKGISNLSNLKQEVTVLRNEKIRMHVGTDKVDFSDVEKLEQQIQVIDTKLADAYLLEVTKQISALDNTKPKNQTELKTKIAAFLDRTTDIEMLRNERIKKHGSSKDPLDLSDLDKLSGSLQRINQSLVSDLITTIRVSINQMEAKTFHEQEKEIQQNFELLAKLEKTLDKSKTSEKLREDIPKLNDLLVAKQKAYPQMVQMQLKSEVFVTQLREVCQANHDDLDKTRNARLRELDRLDREAGITRMVGNLIWGLTNKVGLTTDERLDIRTKQQSLARFKNELFNDKIDTDQLISNLARKRPSELQEGLGISTDNAMELHLLLTELAGKTTSPDELEERMKAIDDISTKIGREPEHLKFVMVEEDESNKKTIGF</sequence>
<organism>
    <name type="scientific">Legionella pneumophila subsp. pneumophila (strain Philadelphia 1 / ATCC 33152 / DSM 7513)</name>
    <dbReference type="NCBI Taxonomy" id="272624"/>
    <lineage>
        <taxon>Bacteria</taxon>
        <taxon>Pseudomonadati</taxon>
        <taxon>Pseudomonadota</taxon>
        <taxon>Gammaproteobacteria</taxon>
        <taxon>Legionellales</taxon>
        <taxon>Legionellaceae</taxon>
        <taxon>Legionella</taxon>
    </lineage>
</organism>
<keyword id="KW-0002">3D-structure</keyword>
<keyword id="KW-0175">Coiled coil</keyword>
<keyword id="KW-0328">Glycosyltransferase</keyword>
<keyword id="KW-0378">Hydrolase</keyword>
<keyword id="KW-1017">Isopeptide bond</keyword>
<keyword id="KW-0511">Multifunctional enzyme</keyword>
<keyword id="KW-0520">NAD</keyword>
<keyword id="KW-0547">Nucleotide-binding</keyword>
<keyword id="KW-0548">Nucleotidyltransferase</keyword>
<keyword id="KW-0645">Protease</keyword>
<keyword id="KW-1185">Reference proteome</keyword>
<keyword id="KW-0964">Secreted</keyword>
<keyword id="KW-0788">Thiol protease</keyword>
<keyword id="KW-0808">Transferase</keyword>
<keyword id="KW-0832">Ubl conjugation</keyword>
<keyword id="KW-0833">Ubl conjugation pathway</keyword>
<keyword id="KW-0843">Virulence</keyword>
<dbReference type="EC" id="3.4.22.-" evidence="4"/>
<dbReference type="EC" id="2.3.2.-" evidence="16"/>
<dbReference type="EC" id="2.4.2.31" evidence="5 7 8 9 10"/>
<dbReference type="EMBL" id="AE017354">
    <property type="protein sequence ID" value="AAU28223.1"/>
    <property type="status" value="ALT_INIT"/>
    <property type="molecule type" value="Genomic_DNA"/>
</dbReference>
<dbReference type="RefSeq" id="WP_015444208.1">
    <property type="nucleotide sequence ID" value="NC_002942.5"/>
</dbReference>
<dbReference type="RefSeq" id="YP_096170.1">
    <property type="nucleotide sequence ID" value="NC_002942.5"/>
</dbReference>
<dbReference type="PDB" id="5CRA">
    <property type="method" value="X-ray"/>
    <property type="resolution" value="2.64 A"/>
    <property type="chains" value="A/B=1-193"/>
</dbReference>
<dbReference type="PDB" id="5CRB">
    <property type="method" value="X-ray"/>
    <property type="resolution" value="2.00 A"/>
    <property type="chains" value="A/B=1-193"/>
</dbReference>
<dbReference type="PDB" id="5CRC">
    <property type="method" value="X-ray"/>
    <property type="resolution" value="2.85 A"/>
    <property type="chains" value="A/B=1-193"/>
</dbReference>
<dbReference type="PDB" id="5YSI">
    <property type="method" value="X-ray"/>
    <property type="resolution" value="1.55 A"/>
    <property type="chains" value="A=756-905"/>
</dbReference>
<dbReference type="PDB" id="5YSJ">
    <property type="method" value="X-ray"/>
    <property type="resolution" value="2.06 A"/>
    <property type="chains" value="A/B/C/D=756-905"/>
</dbReference>
<dbReference type="PDB" id="5YSK">
    <property type="method" value="X-ray"/>
    <property type="resolution" value="2.40 A"/>
    <property type="chains" value="A/B/C/D=756-905"/>
</dbReference>
<dbReference type="PDB" id="6B7Q">
    <property type="method" value="X-ray"/>
    <property type="resolution" value="2.20 A"/>
    <property type="chains" value="A=206-910"/>
</dbReference>
<dbReference type="PDB" id="6G0C">
    <property type="method" value="X-ray"/>
    <property type="resolution" value="2.80 A"/>
    <property type="chains" value="A=213-907"/>
</dbReference>
<dbReference type="PDB" id="6WTG">
    <property type="method" value="X-ray"/>
    <property type="resolution" value="2.63 A"/>
    <property type="chains" value="A=1-193"/>
</dbReference>
<dbReference type="PDB" id="7MIR">
    <property type="method" value="EM"/>
    <property type="resolution" value="2.50 A"/>
    <property type="chains" value="C=231-1190"/>
</dbReference>
<dbReference type="PDB" id="7PPO">
    <property type="method" value="EM"/>
    <property type="resolution" value="2.91 A"/>
    <property type="chains" value="A=231-1190"/>
</dbReference>
<dbReference type="PDB" id="7PQE">
    <property type="method" value="EM"/>
    <property type="resolution" value="3.70 A"/>
    <property type="chains" value="A=231-1190"/>
</dbReference>
<dbReference type="PDB" id="8EFW">
    <property type="method" value="X-ray"/>
    <property type="resolution" value="2.81 A"/>
    <property type="chains" value="B=1-196"/>
</dbReference>
<dbReference type="PDBsum" id="5CRA"/>
<dbReference type="PDBsum" id="5CRB"/>
<dbReference type="PDBsum" id="5CRC"/>
<dbReference type="PDBsum" id="5YSI"/>
<dbReference type="PDBsum" id="5YSJ"/>
<dbReference type="PDBsum" id="5YSK"/>
<dbReference type="PDBsum" id="6B7Q"/>
<dbReference type="PDBsum" id="6G0C"/>
<dbReference type="PDBsum" id="6WTG"/>
<dbReference type="PDBsum" id="7MIR"/>
<dbReference type="PDBsum" id="7PPO"/>
<dbReference type="PDBsum" id="7PQE"/>
<dbReference type="PDBsum" id="8EFW"/>
<dbReference type="EMDB" id="EMD-13583"/>
<dbReference type="EMDB" id="EMD-13591"/>
<dbReference type="EMDB" id="EMD-23862"/>
<dbReference type="SASBDB" id="Q5ZTK4"/>
<dbReference type="SMR" id="Q5ZTK4"/>
<dbReference type="STRING" id="272624.lpg2157"/>
<dbReference type="PaxDb" id="272624-lpg2157"/>
<dbReference type="GeneID" id="57036152"/>
<dbReference type="KEGG" id="lpn:lpg2157"/>
<dbReference type="PATRIC" id="fig|272624.6.peg.2264"/>
<dbReference type="eggNOG" id="COG1196">
    <property type="taxonomic scope" value="Bacteria"/>
</dbReference>
<dbReference type="HOGENOM" id="CLU_002024_0_0_6"/>
<dbReference type="OrthoDB" id="5647340at2"/>
<dbReference type="Proteomes" id="UP000000609">
    <property type="component" value="Chromosome"/>
</dbReference>
<dbReference type="GO" id="GO:0005576">
    <property type="term" value="C:extracellular region"/>
    <property type="evidence" value="ECO:0007669"/>
    <property type="project" value="UniProtKB-SubCell"/>
</dbReference>
<dbReference type="GO" id="GO:0043657">
    <property type="term" value="C:host cell"/>
    <property type="evidence" value="ECO:0000314"/>
    <property type="project" value="UniProtKB"/>
</dbReference>
<dbReference type="GO" id="GO:0008234">
    <property type="term" value="F:cysteine-type peptidase activity"/>
    <property type="evidence" value="ECO:0007669"/>
    <property type="project" value="UniProtKB-KW"/>
</dbReference>
<dbReference type="GO" id="GO:0019784">
    <property type="term" value="F:deNEDDylase activity"/>
    <property type="evidence" value="ECO:0000314"/>
    <property type="project" value="UniProtKB"/>
</dbReference>
<dbReference type="GO" id="GO:0061578">
    <property type="term" value="F:K63-linked deubiquitinase activity"/>
    <property type="evidence" value="ECO:0000314"/>
    <property type="project" value="UniProtKB"/>
</dbReference>
<dbReference type="GO" id="GO:0106274">
    <property type="term" value="F:NAD+-protein-arginine ADP-ribosyltransferase activity"/>
    <property type="evidence" value="ECO:0000314"/>
    <property type="project" value="UniProtKB"/>
</dbReference>
<dbReference type="GO" id="GO:0000166">
    <property type="term" value="F:nucleotide binding"/>
    <property type="evidence" value="ECO:0007669"/>
    <property type="project" value="UniProtKB-KW"/>
</dbReference>
<dbReference type="GO" id="GO:0016779">
    <property type="term" value="F:nucleotidyltransferase activity"/>
    <property type="evidence" value="ECO:0007669"/>
    <property type="project" value="UniProtKB-KW"/>
</dbReference>
<dbReference type="GO" id="GO:0000338">
    <property type="term" value="P:protein deneddylation"/>
    <property type="evidence" value="ECO:0000314"/>
    <property type="project" value="UniProtKB"/>
</dbReference>
<dbReference type="GO" id="GO:0016579">
    <property type="term" value="P:protein deubiquitination"/>
    <property type="evidence" value="ECO:0000314"/>
    <property type="project" value="UniProtKB"/>
</dbReference>
<dbReference type="GO" id="GO:0016567">
    <property type="term" value="P:protein ubiquitination"/>
    <property type="evidence" value="ECO:0000314"/>
    <property type="project" value="UniProtKB"/>
</dbReference>
<dbReference type="GO" id="GO:0006508">
    <property type="term" value="P:proteolysis"/>
    <property type="evidence" value="ECO:0007669"/>
    <property type="project" value="UniProtKB-KW"/>
</dbReference>
<dbReference type="InterPro" id="IPR043934">
    <property type="entry name" value="SidE_DUB"/>
</dbReference>
<dbReference type="InterPro" id="IPR043935">
    <property type="entry name" value="SidE_mART"/>
</dbReference>
<dbReference type="InterPro" id="IPR021014">
    <property type="entry name" value="SidE_PDE"/>
</dbReference>
<dbReference type="Pfam" id="PF19049">
    <property type="entry name" value="SidE_DUB"/>
    <property type="match status" value="1"/>
</dbReference>
<dbReference type="Pfam" id="PF19048">
    <property type="entry name" value="SidE_mART"/>
    <property type="match status" value="1"/>
</dbReference>
<dbReference type="Pfam" id="PF12252">
    <property type="entry name" value="SidE_PDE"/>
    <property type="match status" value="1"/>
</dbReference>
<comment type="function">
    <text evidence="4 5 6 7 8 9 10">Secreted effector that interferes with the host cell ubiquitin pathway and is required for intracellular bacterial replication. Catalyzes the ubiquitination of several mammalian Rab proteins (Rab33b, Rab1, Rab6a and Rab30) during L.pneumophila infection, without engaging the standard cellular enzyme cascade (E1 and E2) (PubMed:29795346). Transfers an ADP-ribose moiety from NAD to the 'Arg-42' residue of ubiquitin in a reaction that releases nicotinamide (PubMed:29795347, PubMed:31330531, PubMed:31330532). The modified ubiquitin is subsequently transferred to serine residues of the substrate protein via a phosphoribose linker that results in the release of AMP (PubMed:27912065). Cannot ubiquitinate the endosomal Rab5 or the cytoskeletal small GTPase Rac1 (PubMed:27049943). Also acts as a deubiquitinase (DUB), catalyzing the cleavage of three of the most abundant polyubiquitin chains ('Lys-11', 'Lys-48' and 'Lys-63') with a distinct preference for 'Lys-63' linkages; is thus able to efficiently remove 'Lys-63'-linked polyubiquitin chains from the phagosomal surface. Is also able to remove NEDD8 from neddylated proteins, but is unable to recognize SUMO. The DUB activity of SdeA is important for regulating the dynamics of ubiquitin association with the bacterial phagosome, but is dispensable for its role in intracellular bacterial replication (PubMed:26598703).</text>
</comment>
<comment type="catalytic activity">
    <reaction evidence="5 7 8 9 10">
        <text>L-arginyl-[protein] + NAD(+) = N(omega)-(ADP-D-ribosyl)-L-arginyl-[protein] + nicotinamide + H(+)</text>
        <dbReference type="Rhea" id="RHEA:19149"/>
        <dbReference type="Rhea" id="RHEA-COMP:10532"/>
        <dbReference type="Rhea" id="RHEA-COMP:15087"/>
        <dbReference type="ChEBI" id="CHEBI:15378"/>
        <dbReference type="ChEBI" id="CHEBI:17154"/>
        <dbReference type="ChEBI" id="CHEBI:29965"/>
        <dbReference type="ChEBI" id="CHEBI:57540"/>
        <dbReference type="ChEBI" id="CHEBI:142554"/>
        <dbReference type="EC" id="2.4.2.31"/>
    </reaction>
</comment>
<comment type="activity regulation">
    <text evidence="5">Ubiquitination catalyzed by SdeA is insensitive to the cysteine alkylation agent maleimide, suggesting that a cysteine conjugation of ubiquitin does not form during the reaction.</text>
</comment>
<comment type="subunit">
    <text evidence="3">Interacts with IcmS.</text>
</comment>
<comment type="subcellular location">
    <subcellularLocation>
        <location evidence="3">Secreted</location>
    </subcellularLocation>
    <subcellularLocation>
        <location evidence="3">Host cell</location>
    </subcellularLocation>
    <text evidence="3">Translocated across the phagosomal membrane into host macrophages via the Dot/Icm type IV secretion system (T4SS) in an IcmS-dependent manner. Appears to localize to the cytoplasmic face of the Legionella-containing vacuole (LCV) in the early stages of infection.</text>
</comment>
<comment type="induction">
    <text evidence="3">Expression is induced during the transition from exponential to stationary phase.</text>
</comment>
<comment type="domain">
    <text evidence="4 5">Contains an N-terminal deubiquitinase domain (DUB) (PubMed:26598703). The DUB domain does not interfere with the ubiquitin conjugation activity catalyzed by the central domain of SdeA, which causes toxicity (PubMed:27049943).</text>
</comment>
<comment type="PTM">
    <text evidence="5">Is able to ubiquitinate itself, but this modification is not required to ubiquitinate Rab33b.</text>
</comment>
<comment type="PTM">
    <text evidence="9 10">Glutamylated at Glu-860 by SidJ; glutamylation inhibits SdeA activity to catalyze the production of ADP-ribosylated ubiquitin.</text>
</comment>
<comment type="disruption phenotype">
    <text evidence="3 4 5">Cells lacking all four members of the SidE family (SdeA, SdeB, SdeC and SidE) show no intracellular growth defect in mouse bone marrow macrophages (BMM), but display attenuated growth inside the protozoan hosts A.castellanii and D.discoideum (PubMed:15773981, PubMed:27049943). This mutant no longer recruits the endoplasmic reticulum (ER) marker GFP-HDEL to its vacuoles, even at 10 hours post infection, and is unable to induce Rab33b ubiquitination during infection (PubMed:27049943). The rate of ubiquitin-positive Legionella-containing vacuoles increases from 40% (wild-type) to approximately 90% in infections using the SidE family deletion mutant strain (PubMed:26598703). All these defects can be completely complemented by expressing sdeA on a plasmid (PubMed:15773981, PubMed:26598703, PubMed:27049943).</text>
</comment>
<comment type="similarity">
    <text evidence="14">Belongs to the SidE family.</text>
</comment>
<comment type="sequence caution" evidence="13">
    <conflict type="erroneous initiation">
        <sequence resource="EMBL-CDS" id="AAU28223"/>
    </conflict>
    <text>Extended N-terminus.</text>
</comment>
<protein>
    <recommendedName>
        <fullName evidence="13">Ubiquitinating/deubiquitinating enzyme SdeA</fullName>
    </recommendedName>
    <alternativeName>
        <fullName evidence="11">Effector protein SdeA</fullName>
    </alternativeName>
    <domain>
        <recommendedName>
            <fullName evidence="12">Deubiquitinase</fullName>
            <shortName evidence="12">DUB</shortName>
            <ecNumber evidence="4">3.4.22.-</ecNumber>
        </recommendedName>
        <alternativeName>
            <fullName evidence="12">Deneddylase</fullName>
        </alternativeName>
        <alternativeName>
            <fullName evidence="12">Deubiquitinating enzyme</fullName>
        </alternativeName>
    </domain>
    <domain>
        <recommendedName>
            <fullName evidence="16">Ubiquitin transferase</fullName>
            <ecNumber evidence="16">2.3.2.-</ecNumber>
        </recommendedName>
    </domain>
    <domain>
        <recommendedName>
            <fullName evidence="16">Mono-ADP-ribosyltransferase</fullName>
            <shortName>mART</shortName>
            <ecNumber evidence="5 7 8 9 10">2.4.2.31</ecNumber>
        </recommendedName>
    </domain>
</protein>
<name>SDEA_LEGPH</name>
<reference key="1">
    <citation type="journal article" date="2004" name="Science">
        <title>The genomic sequence of the accidental pathogen Legionella pneumophila.</title>
        <authorList>
            <person name="Chien M."/>
            <person name="Morozova I."/>
            <person name="Shi S."/>
            <person name="Sheng H."/>
            <person name="Chen J."/>
            <person name="Gomez S.M."/>
            <person name="Asamani G."/>
            <person name="Hill K."/>
            <person name="Nuara J."/>
            <person name="Feder M."/>
            <person name="Rineer J."/>
            <person name="Greenberg J.J."/>
            <person name="Steshenko V."/>
            <person name="Park S.H."/>
            <person name="Zhao B."/>
            <person name="Teplitskaya E."/>
            <person name="Edwards J.R."/>
            <person name="Pampou S."/>
            <person name="Georghiou A."/>
            <person name="Chou I.-C."/>
            <person name="Iannuccilli W."/>
            <person name="Ulz M.E."/>
            <person name="Kim D.H."/>
            <person name="Geringer-Sameth A."/>
            <person name="Goldsberry C."/>
            <person name="Morozov P."/>
            <person name="Fischer S.G."/>
            <person name="Segal G."/>
            <person name="Qu X."/>
            <person name="Rzhetsky A."/>
            <person name="Zhang P."/>
            <person name="Cayanis E."/>
            <person name="De Jong P.J."/>
            <person name="Ju J."/>
            <person name="Kalachikov S."/>
            <person name="Shuman H.A."/>
            <person name="Russo J.J."/>
        </authorList>
    </citation>
    <scope>NUCLEOTIDE SEQUENCE [LARGE SCALE GENOMIC DNA]</scope>
    <source>
        <strain>Philadelphia 1 / ATCC 33152 / DSM 7513</strain>
    </source>
</reference>
<reference key="2">
    <citation type="journal article" date="2005" name="Mol. Microbiol.">
        <title>IcmS-dependent translocation of SdeA into macrophages by the Legionella pneumophila type IV secretion system.</title>
        <authorList>
            <person name="Bardill J.P."/>
            <person name="Miller J.L."/>
            <person name="Vogel J.P."/>
        </authorList>
    </citation>
    <scope>SUBCELLULAR LOCATION</scope>
    <scope>INDUCTION</scope>
    <scope>INTERACTION WITH ICMS</scope>
    <scope>DISRUPTION PHENOTYPE</scope>
    <source>
        <strain>Philadelphia 1 / Lp02</strain>
    </source>
</reference>
<reference key="3">
    <citation type="journal article" date="2016" name="Nature">
        <title>Ubiquitination independent of E1 and E2 enzymes by bacterial effectors.</title>
        <authorList>
            <person name="Qiu J."/>
            <person name="Sheedlo M.J."/>
            <person name="Yu K."/>
            <person name="Tan Y."/>
            <person name="Nakayasu E.S."/>
            <person name="Das C."/>
            <person name="Liu X."/>
            <person name="Luo Z.Q."/>
        </authorList>
    </citation>
    <scope>FUNCTION AS AN UBIQUITINATING ENZYME</scope>
    <scope>CATALYTIC ACTIVITY</scope>
    <scope>SUBSTRATE SPECIFICITY</scope>
    <scope>ACTIVITY REGULATION</scope>
    <scope>DISRUPTION PHENOTYPE</scope>
    <scope>DOMAIN</scope>
    <scope>SELF-UBIQUITINATION</scope>
    <scope>MUTAGENESIS OF CYS-118 AND 860-GLU--GLU-862</scope>
    <source>
        <strain>Philadelphia 1 / Lp02</strain>
    </source>
</reference>
<reference key="4">
    <citation type="journal article" date="2016" name="Cell">
        <title>Phosphoribosylation of ubiquitin promotes serine ubiquitination and impairs conventional ubiquitination.</title>
        <authorList>
            <person name="Bhogaraju S."/>
            <person name="Kalayil S."/>
            <person name="Liu Y."/>
            <person name="Bonn F."/>
            <person name="Colby T."/>
            <person name="Matic I."/>
            <person name="Dikic I."/>
        </authorList>
    </citation>
    <scope>FUNCTION</scope>
</reference>
<reference key="5">
    <citation type="journal article" date="2015" name="Proc. Natl. Acad. Sci. U.S.A.">
        <title>Structural basis of substrate recognition by a bacterial deubiquitinase important for dynamics of phagosome ubiquitination.</title>
        <authorList>
            <person name="Sheedlo M.J."/>
            <person name="Qiu J."/>
            <person name="Tan Y."/>
            <person name="Paul L.N."/>
            <person name="Luo Z.Q."/>
            <person name="Das C."/>
        </authorList>
    </citation>
    <scope>X-RAY CRYSTALLOGRAPHY (2.00 ANGSTROMS) OF 1-193 (DUB DOMAIN) OF WILD-TYPE AND MUTANT ALA-118 ALONE AND IN COMPLEX WITH UBIQUITIN VINYL METHYL ESTER</scope>
    <scope>FUNCTION AS A DEUBIQUITINASE</scope>
    <scope>CATALYTIC ACTIVITY</scope>
    <scope>SUBSTRATE SPECIFICITY</scope>
    <scope>DOMAIN</scope>
    <scope>MUTAGENESIS OF TYR-33; ASP-61; ASN-114 AND CYS-118</scope>
    <scope>DISRUPTION PHENOTYPE</scope>
    <scope>ACTIVE SITE</scope>
    <source>
        <strain>Philadelphia 1 / Lp02</strain>
    </source>
</reference>
<reference key="6">
    <citation type="journal article" date="2019" name="Nature">
        <title>Inhibition of bacterial ubiquitin ligases by SidJ-calmodulin catalysed glutamylation.</title>
        <authorList>
            <person name="Bhogaraju S."/>
            <person name="Bonn F."/>
            <person name="Mukherjee R."/>
            <person name="Adams M."/>
            <person name="Pfleiderer M.M."/>
            <person name="Galej W.P."/>
            <person name="Matkovic V."/>
            <person name="Lopez-Mosqueda J."/>
            <person name="Kalayil S."/>
            <person name="Shin D."/>
            <person name="Dikic I."/>
        </authorList>
    </citation>
    <scope>FUNCTION</scope>
    <scope>GLUTAMYLATION AT GLU-860</scope>
    <scope>CATALYTIC ACTIVITY</scope>
</reference>
<reference key="7">
    <citation type="journal article" date="2019" name="Nature">
        <title>Regulation of phosphoribosyl ubiquitination by a calmodulin-dependent glutamylase.</title>
        <authorList>
            <person name="Gan N."/>
            <person name="Zhen X."/>
            <person name="Liu Y."/>
            <person name="Xu X."/>
            <person name="He C."/>
            <person name="Qiu J."/>
            <person name="Liu Y."/>
            <person name="Fujimoto G.M."/>
            <person name="Nakayasu E.S."/>
            <person name="Zhou B."/>
            <person name="Zhao L."/>
            <person name="Puvar K."/>
            <person name="Das C."/>
            <person name="Ouyang S."/>
            <person name="Luo Z.Q."/>
        </authorList>
    </citation>
    <scope>FUNCTION</scope>
    <scope>GLUTAMYLATION AT GLU-860</scope>
    <scope>MUTAGENESIS OF GLU-860</scope>
    <scope>CATALYTIC ACTIVITY</scope>
</reference>
<reference key="8">
    <citation type="journal article" date="2018" name="Nature">
        <title>Insights into catalysis and function of phosphoribosyl-linked serine ubiquitination.</title>
        <authorList>
            <person name="Kalayil S."/>
            <person name="Bhogaraju S."/>
            <person name="Bonn F."/>
            <person name="Shin D."/>
            <person name="Liu Y."/>
            <person name="Gan N."/>
            <person name="Basquin J."/>
            <person name="Grumati P."/>
            <person name="Luo Z.Q."/>
            <person name="Dikic I."/>
        </authorList>
    </citation>
    <scope>X-RAY CRYSTALLOGRAPHY (2.80 ANGSTROMS) OF 213-907</scope>
    <scope>FUNCTION</scope>
    <scope>MUTAGENESIS OF HIS-277 AND HIS-407</scope>
    <scope>CATALYTIC ACTIVITY</scope>
</reference>
<reference key="9">
    <citation type="journal article" date="2018" name="Nature">
        <title>Mechanism of phosphoribosyl-ubiquitination mediated by a single Legionella effector.</title>
        <authorList>
            <person name="Akturk A."/>
            <person name="Wasilko D.J."/>
            <person name="Wu X."/>
            <person name="Liu Y."/>
            <person name="Zhang Y."/>
            <person name="Qiu J."/>
            <person name="Luo Z.Q."/>
            <person name="Reiter K.H."/>
            <person name="Brzovic P.S."/>
            <person name="Klevit R.E."/>
            <person name="Mao Y."/>
        </authorList>
    </citation>
    <scope>X-RAY CRYSTALLOGRAPHY (2.20 ANGSTROMS) OF 206-910</scope>
    <scope>FUNCTION</scope>
    <scope>MUTAGENESIS OF HIS-277; GLU-340 AND HIS-407</scope>
    <scope>CATALYTIC ACTIVITY</scope>
</reference>
<evidence type="ECO:0000250" key="1">
    <source>
        <dbReference type="UniProtKB" id="P21454"/>
    </source>
</evidence>
<evidence type="ECO:0000255" key="2"/>
<evidence type="ECO:0000269" key="3">
    <source>
    </source>
</evidence>
<evidence type="ECO:0000269" key="4">
    <source>
    </source>
</evidence>
<evidence type="ECO:0000269" key="5">
    <source>
    </source>
</evidence>
<evidence type="ECO:0000269" key="6">
    <source>
    </source>
</evidence>
<evidence type="ECO:0000269" key="7">
    <source>
    </source>
</evidence>
<evidence type="ECO:0000269" key="8">
    <source>
    </source>
</evidence>
<evidence type="ECO:0000269" key="9">
    <source>
    </source>
</evidence>
<evidence type="ECO:0000269" key="10">
    <source>
    </source>
</evidence>
<evidence type="ECO:0000303" key="11">
    <source>
    </source>
</evidence>
<evidence type="ECO:0000303" key="12">
    <source>
    </source>
</evidence>
<evidence type="ECO:0000305" key="13"/>
<evidence type="ECO:0000305" key="14">
    <source>
    </source>
</evidence>
<evidence type="ECO:0000305" key="15">
    <source>
    </source>
</evidence>
<evidence type="ECO:0000305" key="16">
    <source>
    </source>
</evidence>
<evidence type="ECO:0000312" key="17">
    <source>
        <dbReference type="EMBL" id="AAU28223.1"/>
    </source>
</evidence>
<evidence type="ECO:0007829" key="18">
    <source>
        <dbReference type="PDB" id="5YSI"/>
    </source>
</evidence>
<evidence type="ECO:0007829" key="19">
    <source>
        <dbReference type="PDB" id="5YSJ"/>
    </source>
</evidence>
<evidence type="ECO:0007829" key="20">
    <source>
        <dbReference type="PDB" id="6B7Q"/>
    </source>
</evidence>
<evidence type="ECO:0007829" key="21">
    <source>
        <dbReference type="PDB" id="6G0C"/>
    </source>
</evidence>
<evidence type="ECO:0007829" key="22">
    <source>
        <dbReference type="PDB" id="6WTG"/>
    </source>
</evidence>
<evidence type="ECO:0007829" key="23">
    <source>
        <dbReference type="PDB" id="7MIR"/>
    </source>
</evidence>
<evidence type="ECO:0007829" key="24">
    <source>
        <dbReference type="PDB" id="7PPO"/>
    </source>
</evidence>
<evidence type="ECO:0007829" key="25">
    <source>
        <dbReference type="PDB" id="8EFW"/>
    </source>
</evidence>
<feature type="chain" id="PRO_0000436968" description="Ubiquitinating/deubiquitinating enzyme SdeA">
    <location>
        <begin position="1"/>
        <end position="1499"/>
    </location>
</feature>
<feature type="region of interest" description="Deubiquitinase" evidence="4">
    <location>
        <begin position="1"/>
        <end position="193"/>
    </location>
</feature>
<feature type="region of interest" description="Ubiquitin transferase" evidence="16">
    <location>
        <begin position="519" status="uncertain"/>
        <end status="unknown"/>
    </location>
</feature>
<feature type="region of interest" description="Mono-ADP-ribosyltransferase" evidence="16">
    <location>
        <begin position="760" status="uncertain"/>
        <end position="1000" status="uncertain"/>
    </location>
</feature>
<feature type="coiled-coil region" evidence="2">
    <location>
        <begin position="1059"/>
        <end position="1181"/>
    </location>
</feature>
<feature type="active site" description="For deubiquitinase activity" evidence="15">
    <location>
        <position position="64"/>
    </location>
</feature>
<feature type="active site" description="For deubiquitinase activity" evidence="15">
    <location>
        <position position="80"/>
    </location>
</feature>
<feature type="active site" description="Nucleophile; for deubiquitinase activity" evidence="15">
    <location>
        <position position="118"/>
    </location>
</feature>
<feature type="binding site" evidence="1 16">
    <location>
        <begin position="766"/>
        <end position="772"/>
    </location>
    <ligand>
        <name>NAD(+)</name>
        <dbReference type="ChEBI" id="CHEBI:57540"/>
    </ligand>
</feature>
<feature type="binding site" evidence="1 16">
    <location>
        <position position="862"/>
    </location>
    <ligand>
        <name>NAD(+)</name>
        <dbReference type="ChEBI" id="CHEBI:57540"/>
    </ligand>
</feature>
<feature type="modified residue" description="5-glutamyl glutamate" evidence="9 10">
    <location>
        <position position="860"/>
    </location>
</feature>
<feature type="mutagenesis site" description="Loss of deubiquitinase and deneddylase activity." evidence="4">
    <original>Y</original>
    <variation>A</variation>
    <location>
        <position position="33"/>
    </location>
</feature>
<feature type="mutagenesis site" description="Loss of deubiquitinase and deneddylase activity." evidence="4">
    <original>D</original>
    <variation>A</variation>
    <location>
        <position position="61"/>
    </location>
</feature>
<feature type="mutagenesis site" description="Loss of deubiquitinase and deneddylase activity." evidence="4">
    <original>N</original>
    <variation>A</variation>
    <location>
        <position position="114"/>
    </location>
</feature>
<feature type="mutagenesis site" description="Loss of deubiquitinase and deneddylase activity. No effect on ubiquitination activity. Is still able to restore the intracellular growth defect in D.discoideum exhibited by cells lacking all four members of the SidE family." evidence="4 5">
    <original>C</original>
    <variation>A</variation>
    <location>
        <position position="118"/>
    </location>
</feature>
<feature type="mutagenesis site" description="Defective in substrate ubiquitination." evidence="7 8">
    <original>H</original>
    <variation>A</variation>
    <location>
        <position position="277"/>
    </location>
</feature>
<feature type="mutagenesis site" description="Defective in substrate ubiquitination." evidence="7">
    <original>E</original>
    <variation>A</variation>
    <location>
        <position position="340"/>
    </location>
</feature>
<feature type="mutagenesis site" description="Defective in substrate ubiquitination." evidence="7 8">
    <original>H</original>
    <variation>A</variation>
    <location>
        <position position="407"/>
    </location>
</feature>
<feature type="mutagenesis site" description="Loss of Rab protein ubiquitination activity. This mutant has completely lost its toxicity to yeast and is also defective in inhibiting the secretion of the secreted form of the embryonic alkaline phosphatase (SEAP) by mammalian cells. Is not able to restore the intracellular growth defect in D.discoideum as well as the ER marker recruitment defect exhibited by cells lacking all four members of the SidE family." evidence="5">
    <original>ESE</original>
    <variation>ASA</variation>
    <location>
        <begin position="860"/>
        <end position="862"/>
    </location>
</feature>
<feature type="mutagenesis site" description="Loss of glutamylation." evidence="9">
    <original>E</original>
    <variation>A</variation>
    <location>
        <position position="860"/>
    </location>
</feature>
<feature type="helix" evidence="25">
    <location>
        <begin position="5"/>
        <end position="7"/>
    </location>
</feature>
<feature type="helix" evidence="22">
    <location>
        <begin position="12"/>
        <end position="21"/>
    </location>
</feature>
<feature type="strand" evidence="22">
    <location>
        <begin position="30"/>
        <end position="33"/>
    </location>
</feature>
<feature type="strand" evidence="22">
    <location>
        <begin position="36"/>
        <end position="38"/>
    </location>
</feature>
<feature type="helix" evidence="22">
    <location>
        <begin position="41"/>
        <end position="47"/>
    </location>
</feature>
<feature type="strand" evidence="22">
    <location>
        <begin position="48"/>
        <end position="57"/>
    </location>
</feature>
<feature type="strand" evidence="22">
    <location>
        <begin position="62"/>
        <end position="70"/>
    </location>
</feature>
<feature type="strand" evidence="22">
    <location>
        <begin position="75"/>
        <end position="79"/>
    </location>
</feature>
<feature type="helix" evidence="22">
    <location>
        <begin position="84"/>
        <end position="95"/>
    </location>
</feature>
<feature type="strand" evidence="22">
    <location>
        <begin position="103"/>
        <end position="106"/>
    </location>
</feature>
<feature type="helix" evidence="22">
    <location>
        <begin position="118"/>
        <end position="133"/>
    </location>
</feature>
<feature type="strand" evidence="22">
    <location>
        <begin position="134"/>
        <end position="137"/>
    </location>
</feature>
<feature type="helix" evidence="22">
    <location>
        <begin position="141"/>
        <end position="157"/>
    </location>
</feature>
<feature type="helix" evidence="22">
    <location>
        <begin position="160"/>
        <end position="173"/>
    </location>
</feature>
<feature type="turn" evidence="20">
    <location>
        <begin position="234"/>
        <end position="236"/>
    </location>
</feature>
<feature type="helix" evidence="20">
    <location>
        <begin position="238"/>
        <end position="250"/>
    </location>
</feature>
<feature type="turn" evidence="20">
    <location>
        <begin position="251"/>
        <end position="253"/>
    </location>
</feature>
<feature type="strand" evidence="21">
    <location>
        <begin position="258"/>
        <end position="261"/>
    </location>
</feature>
<feature type="strand" evidence="20">
    <location>
        <begin position="265"/>
        <end position="267"/>
    </location>
</feature>
<feature type="strand" evidence="20">
    <location>
        <begin position="270"/>
        <end position="273"/>
    </location>
</feature>
<feature type="strand" evidence="20">
    <location>
        <begin position="275"/>
        <end position="278"/>
    </location>
</feature>
<feature type="helix" evidence="20">
    <location>
        <begin position="279"/>
        <end position="301"/>
    </location>
</feature>
<feature type="strand" evidence="23">
    <location>
        <begin position="310"/>
        <end position="312"/>
    </location>
</feature>
<feature type="helix" evidence="20">
    <location>
        <begin position="315"/>
        <end position="317"/>
    </location>
</feature>
<feature type="helix" evidence="20">
    <location>
        <begin position="320"/>
        <end position="332"/>
    </location>
</feature>
<feature type="turn" evidence="20">
    <location>
        <begin position="333"/>
        <end position="336"/>
    </location>
</feature>
<feature type="helix" evidence="20">
    <location>
        <begin position="344"/>
        <end position="363"/>
    </location>
</feature>
<feature type="helix" evidence="20">
    <location>
        <begin position="366"/>
        <end position="373"/>
    </location>
</feature>
<feature type="strand" evidence="20">
    <location>
        <begin position="374"/>
        <end position="376"/>
    </location>
</feature>
<feature type="helix" evidence="20">
    <location>
        <begin position="377"/>
        <end position="388"/>
    </location>
</feature>
<feature type="helix" evidence="20">
    <location>
        <begin position="391"/>
        <end position="393"/>
    </location>
</feature>
<feature type="strand" evidence="23">
    <location>
        <begin position="395"/>
        <end position="397"/>
    </location>
</feature>
<feature type="helix" evidence="20">
    <location>
        <begin position="398"/>
        <end position="409"/>
    </location>
</feature>
<feature type="helix" evidence="20">
    <location>
        <begin position="410"/>
        <end position="413"/>
    </location>
</feature>
<feature type="helix" evidence="20">
    <location>
        <begin position="418"/>
        <end position="433"/>
    </location>
</feature>
<feature type="helix" evidence="20">
    <location>
        <begin position="435"/>
        <end position="451"/>
    </location>
</feature>
<feature type="strand" evidence="23">
    <location>
        <begin position="459"/>
        <end position="462"/>
    </location>
</feature>
<feature type="turn" evidence="20">
    <location>
        <begin position="470"/>
        <end position="473"/>
    </location>
</feature>
<feature type="strand" evidence="20">
    <location>
        <begin position="474"/>
        <end position="478"/>
    </location>
</feature>
<feature type="strand" evidence="20">
    <location>
        <begin position="480"/>
        <end position="484"/>
    </location>
</feature>
<feature type="strand" evidence="21">
    <location>
        <begin position="493"/>
        <end position="495"/>
    </location>
</feature>
<feature type="strand" evidence="21">
    <location>
        <begin position="498"/>
        <end position="500"/>
    </location>
</feature>
<feature type="helix" evidence="20">
    <location>
        <begin position="516"/>
        <end position="521"/>
    </location>
</feature>
<feature type="helix" evidence="20">
    <location>
        <begin position="523"/>
        <end position="526"/>
    </location>
</feature>
<feature type="turn" evidence="20">
    <location>
        <begin position="530"/>
        <end position="533"/>
    </location>
</feature>
<feature type="helix" evidence="20">
    <location>
        <begin position="545"/>
        <end position="552"/>
    </location>
</feature>
<feature type="helix" evidence="20">
    <location>
        <begin position="555"/>
        <end position="560"/>
    </location>
</feature>
<feature type="helix" evidence="20">
    <location>
        <begin position="564"/>
        <end position="585"/>
    </location>
</feature>
<feature type="helix" evidence="20">
    <location>
        <begin position="600"/>
        <end position="614"/>
    </location>
</feature>
<feature type="helix" evidence="20">
    <location>
        <begin position="616"/>
        <end position="618"/>
    </location>
</feature>
<feature type="strand" evidence="20">
    <location>
        <begin position="623"/>
        <end position="625"/>
    </location>
</feature>
<feature type="strand" evidence="23">
    <location>
        <begin position="629"/>
        <end position="631"/>
    </location>
</feature>
<feature type="helix" evidence="20">
    <location>
        <begin position="633"/>
        <end position="642"/>
    </location>
</feature>
<feature type="helix" evidence="20">
    <location>
        <begin position="645"/>
        <end position="650"/>
    </location>
</feature>
<feature type="helix" evidence="20">
    <location>
        <begin position="654"/>
        <end position="666"/>
    </location>
</feature>
<feature type="turn" evidence="20">
    <location>
        <begin position="667"/>
        <end position="669"/>
    </location>
</feature>
<feature type="strand" evidence="23">
    <location>
        <begin position="674"/>
        <end position="677"/>
    </location>
</feature>
<feature type="helix" evidence="20">
    <location>
        <begin position="684"/>
        <end position="695"/>
    </location>
</feature>
<feature type="turn" evidence="20">
    <location>
        <begin position="696"/>
        <end position="698"/>
    </location>
</feature>
<feature type="helix" evidence="20">
    <location>
        <begin position="701"/>
        <end position="714"/>
    </location>
</feature>
<feature type="helix" evidence="20">
    <location>
        <begin position="716"/>
        <end position="726"/>
    </location>
</feature>
<feature type="helix" evidence="20">
    <location>
        <begin position="735"/>
        <end position="755"/>
    </location>
</feature>
<feature type="strand" evidence="18">
    <location>
        <begin position="762"/>
        <end position="768"/>
    </location>
</feature>
<feature type="helix" evidence="18">
    <location>
        <begin position="772"/>
        <end position="788"/>
    </location>
</feature>
<feature type="helix" evidence="18">
    <location>
        <begin position="790"/>
        <end position="796"/>
    </location>
</feature>
<feature type="helix" evidence="18">
    <location>
        <begin position="799"/>
        <end position="808"/>
    </location>
</feature>
<feature type="helix" evidence="20">
    <location>
        <begin position="809"/>
        <end position="815"/>
    </location>
</feature>
<feature type="strand" evidence="18">
    <location>
        <begin position="817"/>
        <end position="823"/>
    </location>
</feature>
<feature type="helix" evidence="18">
    <location>
        <begin position="825"/>
        <end position="831"/>
    </location>
</feature>
<feature type="strand" evidence="18">
    <location>
        <begin position="835"/>
        <end position="841"/>
    </location>
</feature>
<feature type="strand" evidence="24">
    <location>
        <begin position="843"/>
        <end position="845"/>
    </location>
</feature>
<feature type="strand" evidence="18">
    <location>
        <begin position="847"/>
        <end position="852"/>
    </location>
</feature>
<feature type="helix" evidence="19">
    <location>
        <begin position="855"/>
        <end position="857"/>
    </location>
</feature>
<feature type="strand" evidence="18">
    <location>
        <begin position="862"/>
        <end position="866"/>
    </location>
</feature>
<feature type="strand" evidence="18">
    <location>
        <begin position="871"/>
        <end position="883"/>
    </location>
</feature>
<feature type="strand" evidence="20">
    <location>
        <begin position="885"/>
        <end position="887"/>
    </location>
</feature>
<feature type="strand" evidence="18">
    <location>
        <begin position="889"/>
        <end position="899"/>
    </location>
</feature>
<feature type="turn" evidence="20">
    <location>
        <begin position="901"/>
        <end position="903"/>
    </location>
</feature>
<feature type="turn" evidence="23">
    <location>
        <begin position="909"/>
        <end position="912"/>
    </location>
</feature>
<feature type="helix" evidence="23">
    <location>
        <begin position="913"/>
        <end position="931"/>
    </location>
</feature>
<feature type="helix" evidence="23">
    <location>
        <begin position="1067"/>
        <end position="1074"/>
    </location>
</feature>
<feature type="helix" evidence="23">
    <location>
        <begin position="1079"/>
        <end position="1085"/>
    </location>
</feature>
<feature type="helix" evidence="23">
    <location>
        <begin position="1100"/>
        <end position="1117"/>
    </location>
</feature>
<proteinExistence type="evidence at protein level"/>
<accession>Q5ZTK4</accession>